<dbReference type="EC" id="4.1.1.11" evidence="1"/>
<dbReference type="EMBL" id="CP000769">
    <property type="protein sequence ID" value="ABS24592.1"/>
    <property type="molecule type" value="Genomic_DNA"/>
</dbReference>
<dbReference type="RefSeq" id="WP_011984698.1">
    <property type="nucleotide sequence ID" value="NC_009675.1"/>
</dbReference>
<dbReference type="SMR" id="A7H796"/>
<dbReference type="STRING" id="404589.Anae109_0377"/>
<dbReference type="KEGG" id="afw:Anae109_0377"/>
<dbReference type="eggNOG" id="COG0853">
    <property type="taxonomic scope" value="Bacteria"/>
</dbReference>
<dbReference type="HOGENOM" id="CLU_115305_2_0_7"/>
<dbReference type="OrthoDB" id="9803983at2"/>
<dbReference type="UniPathway" id="UPA00028">
    <property type="reaction ID" value="UER00002"/>
</dbReference>
<dbReference type="Proteomes" id="UP000006382">
    <property type="component" value="Chromosome"/>
</dbReference>
<dbReference type="GO" id="GO:0005829">
    <property type="term" value="C:cytosol"/>
    <property type="evidence" value="ECO:0007669"/>
    <property type="project" value="TreeGrafter"/>
</dbReference>
<dbReference type="GO" id="GO:0004068">
    <property type="term" value="F:aspartate 1-decarboxylase activity"/>
    <property type="evidence" value="ECO:0007669"/>
    <property type="project" value="UniProtKB-UniRule"/>
</dbReference>
<dbReference type="GO" id="GO:0006523">
    <property type="term" value="P:alanine biosynthetic process"/>
    <property type="evidence" value="ECO:0007669"/>
    <property type="project" value="InterPro"/>
</dbReference>
<dbReference type="GO" id="GO:0015940">
    <property type="term" value="P:pantothenate biosynthetic process"/>
    <property type="evidence" value="ECO:0007669"/>
    <property type="project" value="UniProtKB-UniRule"/>
</dbReference>
<dbReference type="CDD" id="cd06919">
    <property type="entry name" value="Asp_decarbox"/>
    <property type="match status" value="1"/>
</dbReference>
<dbReference type="Gene3D" id="2.40.40.20">
    <property type="match status" value="1"/>
</dbReference>
<dbReference type="HAMAP" id="MF_00446">
    <property type="entry name" value="PanD"/>
    <property type="match status" value="1"/>
</dbReference>
<dbReference type="InterPro" id="IPR009010">
    <property type="entry name" value="Asp_de-COase-like_dom_sf"/>
</dbReference>
<dbReference type="InterPro" id="IPR003190">
    <property type="entry name" value="Asp_decarbox"/>
</dbReference>
<dbReference type="NCBIfam" id="TIGR00223">
    <property type="entry name" value="panD"/>
    <property type="match status" value="1"/>
</dbReference>
<dbReference type="PANTHER" id="PTHR21012">
    <property type="entry name" value="ASPARTATE 1-DECARBOXYLASE"/>
    <property type="match status" value="1"/>
</dbReference>
<dbReference type="PANTHER" id="PTHR21012:SF0">
    <property type="entry name" value="ASPARTATE 1-DECARBOXYLASE"/>
    <property type="match status" value="1"/>
</dbReference>
<dbReference type="Pfam" id="PF02261">
    <property type="entry name" value="Asp_decarbox"/>
    <property type="match status" value="1"/>
</dbReference>
<dbReference type="PIRSF" id="PIRSF006246">
    <property type="entry name" value="Asp_decarbox"/>
    <property type="match status" value="1"/>
</dbReference>
<dbReference type="SUPFAM" id="SSF50692">
    <property type="entry name" value="ADC-like"/>
    <property type="match status" value="1"/>
</dbReference>
<accession>A7H796</accession>
<sequence>MRRTFFKSKIHRATVTHADLDYEGSVSIDEDLLDASGILEYEAVHVWNITRGTRLQTYAIKGERGSGVICINGAAAHLNKPGDLVILATFAELDEAEARGFKPTVVLVDRKNKIVESDAVEIAGPARRVSA</sequence>
<proteinExistence type="inferred from homology"/>
<comment type="function">
    <text evidence="1">Catalyzes the pyruvoyl-dependent decarboxylation of aspartate to produce beta-alanine.</text>
</comment>
<comment type="catalytic activity">
    <reaction evidence="1">
        <text>L-aspartate + H(+) = beta-alanine + CO2</text>
        <dbReference type="Rhea" id="RHEA:19497"/>
        <dbReference type="ChEBI" id="CHEBI:15378"/>
        <dbReference type="ChEBI" id="CHEBI:16526"/>
        <dbReference type="ChEBI" id="CHEBI:29991"/>
        <dbReference type="ChEBI" id="CHEBI:57966"/>
        <dbReference type="EC" id="4.1.1.11"/>
    </reaction>
</comment>
<comment type="cofactor">
    <cofactor evidence="1">
        <name>pyruvate</name>
        <dbReference type="ChEBI" id="CHEBI:15361"/>
    </cofactor>
    <text evidence="1">Binds 1 pyruvoyl group covalently per subunit.</text>
</comment>
<comment type="pathway">
    <text evidence="1">Cofactor biosynthesis; (R)-pantothenate biosynthesis; beta-alanine from L-aspartate: step 1/1.</text>
</comment>
<comment type="subunit">
    <text evidence="1">Heterooctamer of four alpha and four beta subunits.</text>
</comment>
<comment type="subcellular location">
    <subcellularLocation>
        <location evidence="1">Cytoplasm</location>
    </subcellularLocation>
</comment>
<comment type="PTM">
    <text evidence="1">Is synthesized initially as an inactive proenzyme, which is activated by self-cleavage at a specific serine bond to produce a beta-subunit with a hydroxyl group at its C-terminus and an alpha-subunit with a pyruvoyl group at its N-terminus.</text>
</comment>
<comment type="similarity">
    <text evidence="1">Belongs to the PanD family.</text>
</comment>
<reference key="1">
    <citation type="journal article" date="2015" name="Genome Announc.">
        <title>Complete genome sequence of Anaeromyxobacter sp. Fw109-5, an anaerobic, metal-reducing bacterium isolated from a contaminated subsurface environment.</title>
        <authorList>
            <person name="Hwang C."/>
            <person name="Copeland A."/>
            <person name="Lucas S."/>
            <person name="Lapidus A."/>
            <person name="Barry K."/>
            <person name="Glavina Del Rio T."/>
            <person name="Dalin E."/>
            <person name="Tice H."/>
            <person name="Pitluck S."/>
            <person name="Sims D."/>
            <person name="Brettin T."/>
            <person name="Bruce D.C."/>
            <person name="Detter J.C."/>
            <person name="Han C.S."/>
            <person name="Schmutz J."/>
            <person name="Larimer F.W."/>
            <person name="Land M.L."/>
            <person name="Hauser L.J."/>
            <person name="Kyrpides N."/>
            <person name="Lykidis A."/>
            <person name="Richardson P."/>
            <person name="Belieav A."/>
            <person name="Sanford R.A."/>
            <person name="Loeffler F.E."/>
            <person name="Fields M.W."/>
        </authorList>
    </citation>
    <scope>NUCLEOTIDE SEQUENCE [LARGE SCALE GENOMIC DNA]</scope>
    <source>
        <strain>Fw109-5</strain>
    </source>
</reference>
<name>PAND_ANADF</name>
<protein>
    <recommendedName>
        <fullName evidence="1">Aspartate 1-decarboxylase</fullName>
        <ecNumber evidence="1">4.1.1.11</ecNumber>
    </recommendedName>
    <alternativeName>
        <fullName evidence="1">Aspartate alpha-decarboxylase</fullName>
    </alternativeName>
    <component>
        <recommendedName>
            <fullName evidence="1">Aspartate 1-decarboxylase beta chain</fullName>
        </recommendedName>
    </component>
    <component>
        <recommendedName>
            <fullName evidence="1">Aspartate 1-decarboxylase alpha chain</fullName>
        </recommendedName>
    </component>
</protein>
<feature type="chain" id="PRO_1000026158" description="Aspartate 1-decarboxylase beta chain" evidence="1">
    <location>
        <begin position="1"/>
        <end position="24"/>
    </location>
</feature>
<feature type="chain" id="PRO_0000316049" description="Aspartate 1-decarboxylase alpha chain" evidence="1">
    <location>
        <begin position="25"/>
        <end position="131"/>
    </location>
</feature>
<feature type="active site" description="Schiff-base intermediate with substrate; via pyruvic acid" evidence="1">
    <location>
        <position position="25"/>
    </location>
</feature>
<feature type="active site" description="Proton donor" evidence="1">
    <location>
        <position position="58"/>
    </location>
</feature>
<feature type="binding site" evidence="1">
    <location>
        <position position="57"/>
    </location>
    <ligand>
        <name>substrate</name>
    </ligand>
</feature>
<feature type="binding site" evidence="1">
    <location>
        <begin position="73"/>
        <end position="75"/>
    </location>
    <ligand>
        <name>substrate</name>
    </ligand>
</feature>
<feature type="modified residue" description="Pyruvic acid (Ser)" evidence="1">
    <location>
        <position position="25"/>
    </location>
</feature>
<keyword id="KW-0068">Autocatalytic cleavage</keyword>
<keyword id="KW-0963">Cytoplasm</keyword>
<keyword id="KW-0210">Decarboxylase</keyword>
<keyword id="KW-0456">Lyase</keyword>
<keyword id="KW-0566">Pantothenate biosynthesis</keyword>
<keyword id="KW-0670">Pyruvate</keyword>
<keyword id="KW-1185">Reference proteome</keyword>
<keyword id="KW-0704">Schiff base</keyword>
<keyword id="KW-0865">Zymogen</keyword>
<gene>
    <name evidence="1" type="primary">panD</name>
    <name type="ordered locus">Anae109_0377</name>
</gene>
<evidence type="ECO:0000255" key="1">
    <source>
        <dbReference type="HAMAP-Rule" id="MF_00446"/>
    </source>
</evidence>
<organism>
    <name type="scientific">Anaeromyxobacter sp. (strain Fw109-5)</name>
    <dbReference type="NCBI Taxonomy" id="404589"/>
    <lineage>
        <taxon>Bacteria</taxon>
        <taxon>Pseudomonadati</taxon>
        <taxon>Myxococcota</taxon>
        <taxon>Myxococcia</taxon>
        <taxon>Myxococcales</taxon>
        <taxon>Cystobacterineae</taxon>
        <taxon>Anaeromyxobacteraceae</taxon>
        <taxon>Anaeromyxobacter</taxon>
    </lineage>
</organism>